<proteinExistence type="inferred from homology"/>
<dbReference type="EMBL" id="AF401293">
    <property type="protein sequence ID" value="AAK91757.1"/>
    <property type="molecule type" value="Genomic_RNA"/>
</dbReference>
<dbReference type="SMR" id="Q77GW2"/>
<dbReference type="GlyCosmos" id="Q77GW2">
    <property type="glycosylation" value="1 site, No reported glycans"/>
</dbReference>
<dbReference type="GO" id="GO:0020002">
    <property type="term" value="C:host cell plasma membrane"/>
    <property type="evidence" value="ECO:0007669"/>
    <property type="project" value="UniProtKB-SubCell"/>
</dbReference>
<dbReference type="GO" id="GO:0016020">
    <property type="term" value="C:membrane"/>
    <property type="evidence" value="ECO:0007669"/>
    <property type="project" value="UniProtKB-UniRule"/>
</dbReference>
<dbReference type="GO" id="GO:0055036">
    <property type="term" value="C:virion membrane"/>
    <property type="evidence" value="ECO:0007669"/>
    <property type="project" value="UniProtKB-SubCell"/>
</dbReference>
<dbReference type="GO" id="GO:0005216">
    <property type="term" value="F:monoatomic ion channel activity"/>
    <property type="evidence" value="ECO:0007669"/>
    <property type="project" value="UniProtKB-UniRule"/>
</dbReference>
<dbReference type="GO" id="GO:0015078">
    <property type="term" value="F:proton transmembrane transporter activity"/>
    <property type="evidence" value="ECO:0007669"/>
    <property type="project" value="UniProtKB-UniRule"/>
</dbReference>
<dbReference type="GO" id="GO:0051259">
    <property type="term" value="P:protein complex oligomerization"/>
    <property type="evidence" value="ECO:0007669"/>
    <property type="project" value="UniProtKB-UniRule"/>
</dbReference>
<dbReference type="GO" id="GO:0044694">
    <property type="term" value="P:symbiont genome entry into host cell via pore formation in plasma membrane"/>
    <property type="evidence" value="ECO:0007669"/>
    <property type="project" value="UniProtKB-UniRule"/>
</dbReference>
<dbReference type="GO" id="GO:0140321">
    <property type="term" value="P:symbiont-mediated suppression of host autophagy"/>
    <property type="evidence" value="ECO:0007669"/>
    <property type="project" value="UniProtKB-KW"/>
</dbReference>
<dbReference type="Gene3D" id="6.10.250.1640">
    <property type="match status" value="1"/>
</dbReference>
<dbReference type="HAMAP" id="MF_04069">
    <property type="entry name" value="INFV_M2"/>
    <property type="match status" value="1"/>
</dbReference>
<dbReference type="InterPro" id="IPR002089">
    <property type="entry name" value="Flu_M2"/>
</dbReference>
<dbReference type="Pfam" id="PF00599">
    <property type="entry name" value="Flu_M2"/>
    <property type="match status" value="1"/>
</dbReference>
<name>M2_I89A2</name>
<keyword id="KW-0025">Alternative splicing</keyword>
<keyword id="KW-1015">Disulfide bond</keyword>
<keyword id="KW-0325">Glycoprotein</keyword>
<keyword id="KW-1032">Host cell membrane</keyword>
<keyword id="KW-1043">Host membrane</keyword>
<keyword id="KW-0945">Host-virus interaction</keyword>
<keyword id="KW-0375">Hydrogen ion transport</keyword>
<keyword id="KW-1083">Inhibition of host autophagy by virus</keyword>
<keyword id="KW-0407">Ion channel</keyword>
<keyword id="KW-0406">Ion transport</keyword>
<keyword id="KW-0449">Lipoprotein</keyword>
<keyword id="KW-0472">Membrane</keyword>
<keyword id="KW-0564">Palmitate</keyword>
<keyword id="KW-0597">Phosphoprotein</keyword>
<keyword id="KW-0735">Signal-anchor</keyword>
<keyword id="KW-0812">Transmembrane</keyword>
<keyword id="KW-1133">Transmembrane helix</keyword>
<keyword id="KW-0813">Transport</keyword>
<keyword id="KW-1182">Viral ion channel</keyword>
<keyword id="KW-0946">Virion</keyword>
<organism>
    <name type="scientific">Influenza A virus (strain A/Beijing/353/1989 H3N2)</name>
    <dbReference type="NCBI Taxonomy" id="380949"/>
    <lineage>
        <taxon>Viruses</taxon>
        <taxon>Riboviria</taxon>
        <taxon>Orthornavirae</taxon>
        <taxon>Negarnaviricota</taxon>
        <taxon>Polyploviricotina</taxon>
        <taxon>Insthoviricetes</taxon>
        <taxon>Articulavirales</taxon>
        <taxon>Orthomyxoviridae</taxon>
        <taxon>Alphainfluenzavirus</taxon>
        <taxon>Alphainfluenzavirus influenzae</taxon>
        <taxon>Influenza A virus</taxon>
    </lineage>
</organism>
<feature type="chain" id="PRO_0000326389" description="Matrix protein 2">
    <location>
        <begin position="1"/>
        <end position="97"/>
    </location>
</feature>
<feature type="topological domain" description="Virion surface" evidence="1">
    <location>
        <begin position="1"/>
        <end position="22"/>
    </location>
</feature>
<feature type="transmembrane region" description="Helical; Signal-anchor for type III membrane protein" evidence="1">
    <location>
        <begin position="23"/>
        <end position="43"/>
    </location>
</feature>
<feature type="topological domain" description="Intravirion" evidence="1">
    <location>
        <begin position="44"/>
        <end position="97"/>
    </location>
</feature>
<feature type="region of interest" description="Disordered" evidence="2">
    <location>
        <begin position="59"/>
        <end position="88"/>
    </location>
</feature>
<feature type="compositionally biased region" description="Basic and acidic residues" evidence="2">
    <location>
        <begin position="71"/>
        <end position="80"/>
    </location>
</feature>
<feature type="site" description="Essential for channel activity, possibly by being protonated during channel activation, and by forming the channel gate and the selective filter" evidence="1">
    <location>
        <position position="37"/>
    </location>
</feature>
<feature type="site" description="Seems to be involved in pH gating" evidence="1">
    <location>
        <position position="41"/>
    </location>
</feature>
<feature type="modified residue" description="Phosphoserine; by host" evidence="1">
    <location>
        <position position="64"/>
    </location>
</feature>
<feature type="modified residue" description="Phosphoserine; by host" evidence="1">
    <location>
        <position position="93"/>
    </location>
</feature>
<feature type="lipid moiety-binding region" description="S-palmitoyl cysteine; by host" evidence="1">
    <location>
        <position position="50"/>
    </location>
</feature>
<feature type="glycosylation site" description="N-linked (GlcNAc...) asparagine; by host" evidence="1">
    <location>
        <position position="20"/>
    </location>
</feature>
<feature type="disulfide bond" description="Interchain (with C-17)" evidence="1">
    <location>
        <position position="17"/>
    </location>
</feature>
<feature type="disulfide bond" description="Interchain (with C-19)" evidence="1">
    <location>
        <position position="19"/>
    </location>
</feature>
<comment type="function">
    <text evidence="1">Forms a proton-selective ion channel that is necessary for the efficient release of the viral genome during virus entry. After attaching to the cell surface, the virion enters the cell by endocytosis. Acidification of the endosome triggers M2 ion channel activity. The influx of protons into virion interior is believed to disrupt interactions between the viral ribonucleoprotein (RNP), matrix protein 1 (M1), and lipid bilayers, thereby freeing the viral genome from interaction with viral proteins and enabling RNA segments to migrate to the host cell nucleus, where influenza virus RNA transcription and replication occur. Also plays a role in viral proteins secretory pathway. Elevates the intravesicular pH of normally acidic compartments, such as trans-Golgi network, preventing newly formed hemagglutinin from premature switching to the fusion-active conformation.</text>
</comment>
<comment type="activity regulation">
    <text>The M2 protein from most influenza A strains is inhibited by amantadine and rimantadine, resulting in viral uncoating incapacity. Emergence of amantadine-resistant variants is usually rapid.</text>
</comment>
<comment type="subunit">
    <text evidence="1">Homotetramer; composed of two disulfide-linked dimers held together by non-covalent interactions. May interact with matrix protein 1.</text>
</comment>
<comment type="subcellular location">
    <subcellularLocation>
        <location evidence="1">Virion membrane</location>
    </subcellularLocation>
    <subcellularLocation>
        <location evidence="1">Host apical cell membrane</location>
        <topology evidence="1">Single-pass type III membrane protein</topology>
    </subcellularLocation>
    <text evidence="1">Abundantly expressed at the apical plasma membrane in infected polarized epithelial cells, in close proximity to budding and assembled virions. Minor component of virions (only 16-20 molecules/virion).</text>
</comment>
<comment type="alternative products">
    <event type="alternative splicing"/>
    <isoform>
        <id>Q77GW2-1</id>
        <name>M2</name>
        <sequence type="displayed"/>
    </isoform>
    <isoform>
        <id>Q77GW1-1</id>
        <name>M1</name>
        <sequence type="external"/>
    </isoform>
    <text>Only the first 9 residues are shared by the 2 isoforms.</text>
</comment>
<comment type="domain">
    <text evidence="1">Cytoplasmic tail plays an important role in virion assembly and morphogenesis.</text>
</comment>
<comment type="miscellaneous">
    <text evidence="1">When the channel is activated, one or more imidazole moieties of His-37 probably become bi-protonated.</text>
</comment>
<comment type="similarity">
    <text evidence="1">Belongs to the influenza viruses matrix protein M2 family.</text>
</comment>
<reference key="1">
    <citation type="submission" date="2001-07" db="EMBL/GenBank/DDBJ databases">
        <authorList>
            <person name="Zhang Y."/>
            <person name="Wang Y."/>
            <person name="Gilmore X."/>
            <person name="Mbawuike I.N."/>
        </authorList>
    </citation>
    <scope>NUCLEOTIDE SEQUENCE [GENOMIC RNA]</scope>
</reference>
<sequence>MSLLTEVETPIRNEWGCRCNDSSDPLVVAASIIGILHLILWILDRLFFKCIYRLFKHGLKRGPSTEGVPESMREEYRKEQQNAVDADDSHFVSIELE</sequence>
<accession>Q77GW2</accession>
<organismHost>
    <name type="scientific">Aves</name>
    <dbReference type="NCBI Taxonomy" id="8782"/>
</organismHost>
<organismHost>
    <name type="scientific">Cetacea</name>
    <name type="common">whales</name>
    <dbReference type="NCBI Taxonomy" id="9721"/>
</organismHost>
<organismHost>
    <name type="scientific">Homo sapiens</name>
    <name type="common">Human</name>
    <dbReference type="NCBI Taxonomy" id="9606"/>
</organismHost>
<organismHost>
    <name type="scientific">Phocidae</name>
    <name type="common">true seals</name>
    <dbReference type="NCBI Taxonomy" id="9709"/>
</organismHost>
<organismHost>
    <name type="scientific">Sus scrofa</name>
    <name type="common">Pig</name>
    <dbReference type="NCBI Taxonomy" id="9823"/>
</organismHost>
<evidence type="ECO:0000255" key="1">
    <source>
        <dbReference type="HAMAP-Rule" id="MF_04069"/>
    </source>
</evidence>
<evidence type="ECO:0000256" key="2">
    <source>
        <dbReference type="SAM" id="MobiDB-lite"/>
    </source>
</evidence>
<protein>
    <recommendedName>
        <fullName evidence="1">Matrix protein 2</fullName>
    </recommendedName>
    <alternativeName>
        <fullName evidence="1">Proton channel protein M2</fullName>
    </alternativeName>
</protein>
<gene>
    <name evidence="1" type="primary">M</name>
</gene>